<accession>O76735</accession>
<accession>Q22340</accession>
<name>SNG1_CAEEL</name>
<gene>
    <name type="primary">sng-1</name>
    <name type="ORF">T08A9.3</name>
</gene>
<keyword id="KW-0472">Membrane</keyword>
<keyword id="KW-1185">Reference proteome</keyword>
<keyword id="KW-0812">Transmembrane</keyword>
<keyword id="KW-1133">Transmembrane helix</keyword>
<reference key="1">
    <citation type="journal article" date="1999" name="J. Neurosci. Methods">
        <title>Visualization of synaptic specializations in live C. elegans with synaptic vesicle protein-GFP fusions.</title>
        <authorList>
            <person name="Nonet M.L."/>
        </authorList>
    </citation>
    <scope>NUCLEOTIDE SEQUENCE [MRNA]</scope>
    <scope>TISSUE SPECIFICITY</scope>
    <source>
        <strain>Bristol N2</strain>
    </source>
</reference>
<reference key="2">
    <citation type="journal article" date="1998" name="Science">
        <title>Genome sequence of the nematode C. elegans: a platform for investigating biology.</title>
        <authorList>
            <consortium name="The C. elegans sequencing consortium"/>
        </authorList>
    </citation>
    <scope>NUCLEOTIDE SEQUENCE [LARGE SCALE GENOMIC DNA]</scope>
    <source>
        <strain>Bristol N2</strain>
    </source>
</reference>
<evidence type="ECO:0000255" key="1"/>
<evidence type="ECO:0000255" key="2">
    <source>
        <dbReference type="PROSITE-ProRule" id="PRU00581"/>
    </source>
</evidence>
<evidence type="ECO:0000256" key="3">
    <source>
        <dbReference type="SAM" id="MobiDB-lite"/>
    </source>
</evidence>
<evidence type="ECO:0000269" key="4">
    <source>
    </source>
</evidence>
<evidence type="ECO:0000305" key="5"/>
<protein>
    <recommendedName>
        <fullName>Synaptogyrin homolog 1</fullName>
    </recommendedName>
</protein>
<proteinExistence type="evidence at transcript level"/>
<feature type="chain" id="PRO_0000184000" description="Synaptogyrin homolog 1">
    <location>
        <begin position="1"/>
        <end position="247"/>
    </location>
</feature>
<feature type="transmembrane region" description="Helical" evidence="1">
    <location>
        <begin position="25"/>
        <end position="45"/>
    </location>
</feature>
<feature type="transmembrane region" description="Helical" evidence="1">
    <location>
        <begin position="69"/>
        <end position="89"/>
    </location>
</feature>
<feature type="transmembrane region" description="Helical" evidence="1">
    <location>
        <begin position="105"/>
        <end position="125"/>
    </location>
</feature>
<feature type="transmembrane region" description="Helical" evidence="1">
    <location>
        <begin position="151"/>
        <end position="171"/>
    </location>
</feature>
<feature type="domain" description="MARVEL" evidence="2">
    <location>
        <begin position="21"/>
        <end position="175"/>
    </location>
</feature>
<feature type="region of interest" description="Disordered" evidence="3">
    <location>
        <begin position="206"/>
        <end position="247"/>
    </location>
</feature>
<feature type="compositionally biased region" description="Polar residues" evidence="3">
    <location>
        <begin position="220"/>
        <end position="247"/>
    </location>
</feature>
<sequence length="247" mass="26792">MENVRAYGAGLAGANFDKNTFFKKPTVLFRCAALLFGLILWYSVSKGGWHKPSDAIHPVCLYGRSSSTCSFATAVGFFAVCGAIVLIVLDAKMDQISSVPTRRRAVLADLVVSAIFTAIFLIGFFTFWSKLSAFEVDEDDENPIKTNNAKFGILSALLSFLAWGGAAFFAWRRYEEGNQATHEPNYDEHFGQVSTDVQDGYGYGGDSTGIGHVGAPPPQSSYQSGAAPQTMQQPPSNPYTQSEGYGY</sequence>
<comment type="subcellular location">
    <subcellularLocation>
        <location>Membrane</location>
        <topology>Multi-pass membrane protein</topology>
    </subcellularLocation>
</comment>
<comment type="tissue specificity">
    <text evidence="4">Expressed in a wide variety of neurons and is expressed weakly in the non-neuronal distal tip cells. A punctate pattern was observed in the ventral and dorsal nerve cords and the nerve ring. Weak expression is seen in neuronal cell bodies and commissures.</text>
</comment>
<comment type="similarity">
    <text evidence="5">Belongs to the synaptogyrin family.</text>
</comment>
<organism>
    <name type="scientific">Caenorhabditis elegans</name>
    <dbReference type="NCBI Taxonomy" id="6239"/>
    <lineage>
        <taxon>Eukaryota</taxon>
        <taxon>Metazoa</taxon>
        <taxon>Ecdysozoa</taxon>
        <taxon>Nematoda</taxon>
        <taxon>Chromadorea</taxon>
        <taxon>Rhabditida</taxon>
        <taxon>Rhabditina</taxon>
        <taxon>Rhabditomorpha</taxon>
        <taxon>Rhabditoidea</taxon>
        <taxon>Rhabditidae</taxon>
        <taxon>Peloderinae</taxon>
        <taxon>Caenorhabditis</taxon>
    </lineage>
</organism>
<dbReference type="EMBL" id="AF079373">
    <property type="protein sequence ID" value="AAC27798.1"/>
    <property type="molecule type" value="mRNA"/>
</dbReference>
<dbReference type="EMBL" id="FO080414">
    <property type="protein sequence ID" value="CCD63516.1"/>
    <property type="molecule type" value="Genomic_DNA"/>
</dbReference>
<dbReference type="PIR" id="F89567">
    <property type="entry name" value="F89567"/>
</dbReference>
<dbReference type="PIR" id="T43324">
    <property type="entry name" value="T43324"/>
</dbReference>
<dbReference type="RefSeq" id="NP_509239.1">
    <property type="nucleotide sequence ID" value="NM_076838.6"/>
</dbReference>
<dbReference type="SMR" id="O76735"/>
<dbReference type="FunCoup" id="O76735">
    <property type="interactions" value="782"/>
</dbReference>
<dbReference type="STRING" id="6239.T08A9.3.1"/>
<dbReference type="PaxDb" id="6239-T08A9.3"/>
<dbReference type="PeptideAtlas" id="O76735"/>
<dbReference type="EnsemblMetazoa" id="T08A9.3.1">
    <property type="protein sequence ID" value="T08A9.3.1"/>
    <property type="gene ID" value="WBGene00004912"/>
</dbReference>
<dbReference type="GeneID" id="180995"/>
<dbReference type="KEGG" id="cel:CELE_T08A9.3"/>
<dbReference type="UCSC" id="T08A9.3">
    <property type="organism name" value="c. elegans"/>
</dbReference>
<dbReference type="AGR" id="WB:WBGene00004912"/>
<dbReference type="CTD" id="180995"/>
<dbReference type="WormBase" id="T08A9.3">
    <property type="protein sequence ID" value="CE21167"/>
    <property type="gene ID" value="WBGene00004912"/>
    <property type="gene designation" value="sng-1"/>
</dbReference>
<dbReference type="eggNOG" id="KOG4016">
    <property type="taxonomic scope" value="Eukaryota"/>
</dbReference>
<dbReference type="GeneTree" id="ENSGT00950000182935"/>
<dbReference type="HOGENOM" id="CLU_1001978_0_0_1"/>
<dbReference type="InParanoid" id="O76735"/>
<dbReference type="OMA" id="FYLWSQW"/>
<dbReference type="OrthoDB" id="10041611at2759"/>
<dbReference type="PhylomeDB" id="O76735"/>
<dbReference type="Reactome" id="R-CEL-6798695">
    <property type="pathway name" value="Neutrophil degranulation"/>
</dbReference>
<dbReference type="PRO" id="PR:O76735"/>
<dbReference type="Proteomes" id="UP000001940">
    <property type="component" value="Chromosome X"/>
</dbReference>
<dbReference type="Bgee" id="WBGene00004912">
    <property type="expression patterns" value="Expressed in pharyngeal muscle cell (C elegans) and 3 other cell types or tissues"/>
</dbReference>
<dbReference type="GO" id="GO:0031410">
    <property type="term" value="C:cytoplasmic vesicle"/>
    <property type="evidence" value="ECO:0000314"/>
    <property type="project" value="WormBase"/>
</dbReference>
<dbReference type="GO" id="GO:0031594">
    <property type="term" value="C:neuromuscular junction"/>
    <property type="evidence" value="ECO:0000318"/>
    <property type="project" value="GO_Central"/>
</dbReference>
<dbReference type="GO" id="GO:0008021">
    <property type="term" value="C:synaptic vesicle"/>
    <property type="evidence" value="ECO:0000314"/>
    <property type="project" value="WormBase"/>
</dbReference>
<dbReference type="GO" id="GO:0030672">
    <property type="term" value="C:synaptic vesicle membrane"/>
    <property type="evidence" value="ECO:0000318"/>
    <property type="project" value="GO_Central"/>
</dbReference>
<dbReference type="GO" id="GO:0017157">
    <property type="term" value="P:regulation of exocytosis"/>
    <property type="evidence" value="ECO:0000304"/>
    <property type="project" value="WormBase"/>
</dbReference>
<dbReference type="GO" id="GO:0048489">
    <property type="term" value="P:synaptic vesicle transport"/>
    <property type="evidence" value="ECO:0000304"/>
    <property type="project" value="WormBase"/>
</dbReference>
<dbReference type="InterPro" id="IPR008253">
    <property type="entry name" value="Marvel"/>
</dbReference>
<dbReference type="InterPro" id="IPR016579">
    <property type="entry name" value="Synaptogyrin"/>
</dbReference>
<dbReference type="PANTHER" id="PTHR10838">
    <property type="entry name" value="SYNAPTOGYRIN"/>
    <property type="match status" value="1"/>
</dbReference>
<dbReference type="PANTHER" id="PTHR10838:SF20">
    <property type="entry name" value="SYNAPTOGYRIN"/>
    <property type="match status" value="1"/>
</dbReference>
<dbReference type="Pfam" id="PF01284">
    <property type="entry name" value="MARVEL"/>
    <property type="match status" value="1"/>
</dbReference>
<dbReference type="PIRSF" id="PIRSF011282">
    <property type="entry name" value="Synaptogyrin"/>
    <property type="match status" value="1"/>
</dbReference>
<dbReference type="PROSITE" id="PS51225">
    <property type="entry name" value="MARVEL"/>
    <property type="match status" value="1"/>
</dbReference>